<protein>
    <recommendedName>
        <fullName evidence="1">ATP synthase subunit alpha</fullName>
        <ecNumber evidence="1">7.1.2.2</ecNumber>
    </recommendedName>
    <alternativeName>
        <fullName evidence="1">ATP synthase F1 sector subunit alpha</fullName>
    </alternativeName>
    <alternativeName>
        <fullName evidence="1">F-ATPase subunit alpha</fullName>
    </alternativeName>
</protein>
<organism>
    <name type="scientific">Xanthomonas axonopodis pv. citri (strain 306)</name>
    <dbReference type="NCBI Taxonomy" id="190486"/>
    <lineage>
        <taxon>Bacteria</taxon>
        <taxon>Pseudomonadati</taxon>
        <taxon>Pseudomonadota</taxon>
        <taxon>Gammaproteobacteria</taxon>
        <taxon>Lysobacterales</taxon>
        <taxon>Lysobacteraceae</taxon>
        <taxon>Xanthomonas</taxon>
    </lineage>
</organism>
<dbReference type="EC" id="7.1.2.2" evidence="1"/>
<dbReference type="EMBL" id="AE008923">
    <property type="protein sequence ID" value="AAM38494.1"/>
    <property type="molecule type" value="Genomic_DNA"/>
</dbReference>
<dbReference type="RefSeq" id="WP_003484004.1">
    <property type="nucleotide sequence ID" value="NC_003919.1"/>
</dbReference>
<dbReference type="SMR" id="Q8PGG5"/>
<dbReference type="GeneID" id="97511842"/>
<dbReference type="KEGG" id="xac:XAC3651"/>
<dbReference type="eggNOG" id="COG0056">
    <property type="taxonomic scope" value="Bacteria"/>
</dbReference>
<dbReference type="HOGENOM" id="CLU_010091_2_1_6"/>
<dbReference type="Proteomes" id="UP000000576">
    <property type="component" value="Chromosome"/>
</dbReference>
<dbReference type="GO" id="GO:0005886">
    <property type="term" value="C:plasma membrane"/>
    <property type="evidence" value="ECO:0007669"/>
    <property type="project" value="UniProtKB-SubCell"/>
</dbReference>
<dbReference type="GO" id="GO:0045259">
    <property type="term" value="C:proton-transporting ATP synthase complex"/>
    <property type="evidence" value="ECO:0007669"/>
    <property type="project" value="UniProtKB-KW"/>
</dbReference>
<dbReference type="GO" id="GO:0043531">
    <property type="term" value="F:ADP binding"/>
    <property type="evidence" value="ECO:0007669"/>
    <property type="project" value="TreeGrafter"/>
</dbReference>
<dbReference type="GO" id="GO:0005524">
    <property type="term" value="F:ATP binding"/>
    <property type="evidence" value="ECO:0007669"/>
    <property type="project" value="UniProtKB-UniRule"/>
</dbReference>
<dbReference type="GO" id="GO:0046933">
    <property type="term" value="F:proton-transporting ATP synthase activity, rotational mechanism"/>
    <property type="evidence" value="ECO:0007669"/>
    <property type="project" value="UniProtKB-UniRule"/>
</dbReference>
<dbReference type="CDD" id="cd18113">
    <property type="entry name" value="ATP-synt_F1_alpha_C"/>
    <property type="match status" value="1"/>
</dbReference>
<dbReference type="CDD" id="cd18116">
    <property type="entry name" value="ATP-synt_F1_alpha_N"/>
    <property type="match status" value="1"/>
</dbReference>
<dbReference type="CDD" id="cd01132">
    <property type="entry name" value="F1-ATPase_alpha_CD"/>
    <property type="match status" value="1"/>
</dbReference>
<dbReference type="FunFam" id="1.20.150.20:FF:000001">
    <property type="entry name" value="ATP synthase subunit alpha"/>
    <property type="match status" value="1"/>
</dbReference>
<dbReference type="FunFam" id="2.40.30.20:FF:000001">
    <property type="entry name" value="ATP synthase subunit alpha"/>
    <property type="match status" value="1"/>
</dbReference>
<dbReference type="FunFam" id="3.40.50.300:FF:000002">
    <property type="entry name" value="ATP synthase subunit alpha"/>
    <property type="match status" value="1"/>
</dbReference>
<dbReference type="Gene3D" id="2.40.30.20">
    <property type="match status" value="1"/>
</dbReference>
<dbReference type="Gene3D" id="1.20.150.20">
    <property type="entry name" value="ATP synthase alpha/beta chain, C-terminal domain"/>
    <property type="match status" value="1"/>
</dbReference>
<dbReference type="Gene3D" id="3.40.50.300">
    <property type="entry name" value="P-loop containing nucleotide triphosphate hydrolases"/>
    <property type="match status" value="1"/>
</dbReference>
<dbReference type="HAMAP" id="MF_01346">
    <property type="entry name" value="ATP_synth_alpha_bact"/>
    <property type="match status" value="1"/>
</dbReference>
<dbReference type="InterPro" id="IPR023366">
    <property type="entry name" value="ATP_synth_asu-like_sf"/>
</dbReference>
<dbReference type="InterPro" id="IPR000793">
    <property type="entry name" value="ATP_synth_asu_C"/>
</dbReference>
<dbReference type="InterPro" id="IPR038376">
    <property type="entry name" value="ATP_synth_asu_C_sf"/>
</dbReference>
<dbReference type="InterPro" id="IPR033732">
    <property type="entry name" value="ATP_synth_F1_a_nt-bd_dom"/>
</dbReference>
<dbReference type="InterPro" id="IPR005294">
    <property type="entry name" value="ATP_synth_F1_asu"/>
</dbReference>
<dbReference type="InterPro" id="IPR020003">
    <property type="entry name" value="ATPase_a/bsu_AS"/>
</dbReference>
<dbReference type="InterPro" id="IPR004100">
    <property type="entry name" value="ATPase_F1/V1/A1_a/bsu_N"/>
</dbReference>
<dbReference type="InterPro" id="IPR036121">
    <property type="entry name" value="ATPase_F1/V1/A1_a/bsu_N_sf"/>
</dbReference>
<dbReference type="InterPro" id="IPR000194">
    <property type="entry name" value="ATPase_F1/V1/A1_a/bsu_nucl-bd"/>
</dbReference>
<dbReference type="InterPro" id="IPR027417">
    <property type="entry name" value="P-loop_NTPase"/>
</dbReference>
<dbReference type="NCBIfam" id="TIGR00962">
    <property type="entry name" value="atpA"/>
    <property type="match status" value="1"/>
</dbReference>
<dbReference type="NCBIfam" id="NF009884">
    <property type="entry name" value="PRK13343.1"/>
    <property type="match status" value="1"/>
</dbReference>
<dbReference type="PANTHER" id="PTHR48082">
    <property type="entry name" value="ATP SYNTHASE SUBUNIT ALPHA, MITOCHONDRIAL"/>
    <property type="match status" value="1"/>
</dbReference>
<dbReference type="PANTHER" id="PTHR48082:SF2">
    <property type="entry name" value="ATP SYNTHASE SUBUNIT ALPHA, MITOCHONDRIAL"/>
    <property type="match status" value="1"/>
</dbReference>
<dbReference type="Pfam" id="PF00006">
    <property type="entry name" value="ATP-synt_ab"/>
    <property type="match status" value="1"/>
</dbReference>
<dbReference type="Pfam" id="PF00306">
    <property type="entry name" value="ATP-synt_ab_C"/>
    <property type="match status" value="1"/>
</dbReference>
<dbReference type="Pfam" id="PF02874">
    <property type="entry name" value="ATP-synt_ab_N"/>
    <property type="match status" value="1"/>
</dbReference>
<dbReference type="SUPFAM" id="SSF47917">
    <property type="entry name" value="C-terminal domain of alpha and beta subunits of F1 ATP synthase"/>
    <property type="match status" value="1"/>
</dbReference>
<dbReference type="SUPFAM" id="SSF50615">
    <property type="entry name" value="N-terminal domain of alpha and beta subunits of F1 ATP synthase"/>
    <property type="match status" value="1"/>
</dbReference>
<dbReference type="SUPFAM" id="SSF52540">
    <property type="entry name" value="P-loop containing nucleoside triphosphate hydrolases"/>
    <property type="match status" value="1"/>
</dbReference>
<dbReference type="PROSITE" id="PS00152">
    <property type="entry name" value="ATPASE_ALPHA_BETA"/>
    <property type="match status" value="1"/>
</dbReference>
<reference key="1">
    <citation type="journal article" date="2002" name="Nature">
        <title>Comparison of the genomes of two Xanthomonas pathogens with differing host specificities.</title>
        <authorList>
            <person name="da Silva A.C.R."/>
            <person name="Ferro J.A."/>
            <person name="Reinach F.C."/>
            <person name="Farah C.S."/>
            <person name="Furlan L.R."/>
            <person name="Quaggio R.B."/>
            <person name="Monteiro-Vitorello C.B."/>
            <person name="Van Sluys M.A."/>
            <person name="Almeida N.F. Jr."/>
            <person name="Alves L.M.C."/>
            <person name="do Amaral A.M."/>
            <person name="Bertolini M.C."/>
            <person name="Camargo L.E.A."/>
            <person name="Camarotte G."/>
            <person name="Cannavan F."/>
            <person name="Cardozo J."/>
            <person name="Chambergo F."/>
            <person name="Ciapina L.P."/>
            <person name="Cicarelli R.M.B."/>
            <person name="Coutinho L.L."/>
            <person name="Cursino-Santos J.R."/>
            <person name="El-Dorry H."/>
            <person name="Faria J.B."/>
            <person name="Ferreira A.J.S."/>
            <person name="Ferreira R.C.C."/>
            <person name="Ferro M.I.T."/>
            <person name="Formighieri E.F."/>
            <person name="Franco M.C."/>
            <person name="Greggio C.C."/>
            <person name="Gruber A."/>
            <person name="Katsuyama A.M."/>
            <person name="Kishi L.T."/>
            <person name="Leite R.P."/>
            <person name="Lemos E.G.M."/>
            <person name="Lemos M.V.F."/>
            <person name="Locali E.C."/>
            <person name="Machado M.A."/>
            <person name="Madeira A.M.B.N."/>
            <person name="Martinez-Rossi N.M."/>
            <person name="Martins E.C."/>
            <person name="Meidanis J."/>
            <person name="Menck C.F.M."/>
            <person name="Miyaki C.Y."/>
            <person name="Moon D.H."/>
            <person name="Moreira L.M."/>
            <person name="Novo M.T.M."/>
            <person name="Okura V.K."/>
            <person name="Oliveira M.C."/>
            <person name="Oliveira V.R."/>
            <person name="Pereira H.A."/>
            <person name="Rossi A."/>
            <person name="Sena J.A.D."/>
            <person name="Silva C."/>
            <person name="de Souza R.F."/>
            <person name="Spinola L.A.F."/>
            <person name="Takita M.A."/>
            <person name="Tamura R.E."/>
            <person name="Teixeira E.C."/>
            <person name="Tezza R.I.D."/>
            <person name="Trindade dos Santos M."/>
            <person name="Truffi D."/>
            <person name="Tsai S.M."/>
            <person name="White F.F."/>
            <person name="Setubal J.C."/>
            <person name="Kitajima J.P."/>
        </authorList>
    </citation>
    <scope>NUCLEOTIDE SEQUENCE [LARGE SCALE GENOMIC DNA]</scope>
    <source>
        <strain>306</strain>
    </source>
</reference>
<gene>
    <name evidence="1" type="primary">atpA</name>
    <name type="ordered locus">XAC3651</name>
</gene>
<proteinExistence type="inferred from homology"/>
<sequence>MATTLNPSEISDLIKTRIEAVKLSAESRNEGSVTSVSDGIVRIFGLADVMQGEMIELPNNTFALALNLERDSVGAVVLGDYESLREGDVAKTTGRILEVPVGPELLGRVVNALGEPIDGKGPLGATQTAPVERVAPGVIWRKSVDQPVQTGYKSVDAMIPIGRGQRELVIGDRQTGKTALAIDAVINQKGTGIKCVYVAIGQKASTVANIVRKLEENGALAHTVVVAATASESAAMQYISPYAGCTMGEYFMDRGEDALIVYDDLSKQAVAYRQISLLLKRPPGREAYPGDVFYLHSRLLERAARVSEEYVEKFTNGAVTGKTGSLTALPIIETQAGDVSAFVPTNVISITDGQIFLETDLFNAGIRPAVNAGISVSRVGGAAQTKIIKKLSGGIRISLAQYRELAAFAQFASDLDEATRKQLERGQRVTELMKQKQYAPMSIANQALSIYAVNEGYLDDVPVNKLLAFEEGLHAHFANTQGELVSKINSTGGWDNDIEASFKKGIEEFKTTGSW</sequence>
<evidence type="ECO:0000255" key="1">
    <source>
        <dbReference type="HAMAP-Rule" id="MF_01346"/>
    </source>
</evidence>
<accession>Q8PGG5</accession>
<name>ATPA_XANAC</name>
<feature type="chain" id="PRO_0000238402" description="ATP synthase subunit alpha">
    <location>
        <begin position="1"/>
        <end position="515"/>
    </location>
</feature>
<feature type="binding site" evidence="1">
    <location>
        <begin position="171"/>
        <end position="178"/>
    </location>
    <ligand>
        <name>ATP</name>
        <dbReference type="ChEBI" id="CHEBI:30616"/>
    </ligand>
</feature>
<feature type="site" description="Required for activity" evidence="1">
    <location>
        <position position="375"/>
    </location>
</feature>
<keyword id="KW-0066">ATP synthesis</keyword>
<keyword id="KW-0067">ATP-binding</keyword>
<keyword id="KW-0997">Cell inner membrane</keyword>
<keyword id="KW-1003">Cell membrane</keyword>
<keyword id="KW-0139">CF(1)</keyword>
<keyword id="KW-0375">Hydrogen ion transport</keyword>
<keyword id="KW-0406">Ion transport</keyword>
<keyword id="KW-0472">Membrane</keyword>
<keyword id="KW-0547">Nucleotide-binding</keyword>
<keyword id="KW-1278">Translocase</keyword>
<keyword id="KW-0813">Transport</keyword>
<comment type="function">
    <text evidence="1">Produces ATP from ADP in the presence of a proton gradient across the membrane. The alpha chain is a regulatory subunit.</text>
</comment>
<comment type="catalytic activity">
    <reaction evidence="1">
        <text>ATP + H2O + 4 H(+)(in) = ADP + phosphate + 5 H(+)(out)</text>
        <dbReference type="Rhea" id="RHEA:57720"/>
        <dbReference type="ChEBI" id="CHEBI:15377"/>
        <dbReference type="ChEBI" id="CHEBI:15378"/>
        <dbReference type="ChEBI" id="CHEBI:30616"/>
        <dbReference type="ChEBI" id="CHEBI:43474"/>
        <dbReference type="ChEBI" id="CHEBI:456216"/>
        <dbReference type="EC" id="7.1.2.2"/>
    </reaction>
</comment>
<comment type="subunit">
    <text evidence="1">F-type ATPases have 2 components, CF(1) - the catalytic core - and CF(0) - the membrane proton channel. CF(1) has five subunits: alpha(3), beta(3), gamma(1), delta(1), epsilon(1). CF(0) has three main subunits: a(1), b(2) and c(9-12). The alpha and beta chains form an alternating ring which encloses part of the gamma chain. CF(1) is attached to CF(0) by a central stalk formed by the gamma and epsilon chains, while a peripheral stalk is formed by the delta and b chains.</text>
</comment>
<comment type="subcellular location">
    <subcellularLocation>
        <location evidence="1">Cell inner membrane</location>
        <topology evidence="1">Peripheral membrane protein</topology>
    </subcellularLocation>
</comment>
<comment type="similarity">
    <text evidence="1">Belongs to the ATPase alpha/beta chains family.</text>
</comment>